<organism>
    <name type="scientific">Xylella fastidiosa (strain 9a5c)</name>
    <dbReference type="NCBI Taxonomy" id="160492"/>
    <lineage>
        <taxon>Bacteria</taxon>
        <taxon>Pseudomonadati</taxon>
        <taxon>Pseudomonadota</taxon>
        <taxon>Gammaproteobacteria</taxon>
        <taxon>Lysobacterales</taxon>
        <taxon>Lysobacteraceae</taxon>
        <taxon>Xylella</taxon>
    </lineage>
</organism>
<sequence length="339" mass="38268">MSSGRGPRIPEYWYGQVPVPPFMRFMEVIYAGAVSLRRLAYRRGWRRRYGVAVPVVVIGNLVAGGTGKTPLTIEIVARLREAGWTPGIASRGYGRRDPKTPRWIQPDTPIELAGDEPAMIAWKTGMRVRVDVDRSAAARALVAEGCDIVVCDDGLQHYRLMRDIEIEVIDGQRRYGNGHLLPAGPLREPMVRGRLCDFRVLNAGQYSDRPTSGFGPGDWQMRLHIDHVQSLQGSRRRSLDAFSGQRVHAVAGIAHPERFFAMLRQRGIGVVPHAFPDHHFYRAEDFTFGSRLPVLMTDKDAVKCRAFADDWFFSVPLRVELPTAFWTALFDRLERLVSC</sequence>
<keyword id="KW-0067">ATP-binding</keyword>
<keyword id="KW-0418">Kinase</keyword>
<keyword id="KW-0441">Lipid A biosynthesis</keyword>
<keyword id="KW-0444">Lipid biosynthesis</keyword>
<keyword id="KW-0443">Lipid metabolism</keyword>
<keyword id="KW-0547">Nucleotide-binding</keyword>
<keyword id="KW-0808">Transferase</keyword>
<feature type="chain" id="PRO_0000190960" description="Tetraacyldisaccharide 4'-kinase">
    <location>
        <begin position="1"/>
        <end position="339"/>
    </location>
</feature>
<feature type="binding site" evidence="1">
    <location>
        <begin position="62"/>
        <end position="69"/>
    </location>
    <ligand>
        <name>ATP</name>
        <dbReference type="ChEBI" id="CHEBI:30616"/>
    </ligand>
</feature>
<name>LPXK_XYLFA</name>
<gene>
    <name evidence="1" type="primary">lpxK</name>
    <name type="ordered locus">XF_1082</name>
</gene>
<reference key="1">
    <citation type="journal article" date="2000" name="Nature">
        <title>The genome sequence of the plant pathogen Xylella fastidiosa.</title>
        <authorList>
            <person name="Simpson A.J.G."/>
            <person name="Reinach F.C."/>
            <person name="Arruda P."/>
            <person name="Abreu F.A."/>
            <person name="Acencio M."/>
            <person name="Alvarenga R."/>
            <person name="Alves L.M.C."/>
            <person name="Araya J.E."/>
            <person name="Baia G.S."/>
            <person name="Baptista C.S."/>
            <person name="Barros M.H."/>
            <person name="Bonaccorsi E.D."/>
            <person name="Bordin S."/>
            <person name="Bove J.M."/>
            <person name="Briones M.R.S."/>
            <person name="Bueno M.R.P."/>
            <person name="Camargo A.A."/>
            <person name="Camargo L.E.A."/>
            <person name="Carraro D.M."/>
            <person name="Carrer H."/>
            <person name="Colauto N.B."/>
            <person name="Colombo C."/>
            <person name="Costa F.F."/>
            <person name="Costa M.C.R."/>
            <person name="Costa-Neto C.M."/>
            <person name="Coutinho L.L."/>
            <person name="Cristofani M."/>
            <person name="Dias-Neto E."/>
            <person name="Docena C."/>
            <person name="El-Dorry H."/>
            <person name="Facincani A.P."/>
            <person name="Ferreira A.J.S."/>
            <person name="Ferreira V.C.A."/>
            <person name="Ferro J.A."/>
            <person name="Fraga J.S."/>
            <person name="Franca S.C."/>
            <person name="Franco M.C."/>
            <person name="Frohme M."/>
            <person name="Furlan L.R."/>
            <person name="Garnier M."/>
            <person name="Goldman G.H."/>
            <person name="Goldman M.H.S."/>
            <person name="Gomes S.L."/>
            <person name="Gruber A."/>
            <person name="Ho P.L."/>
            <person name="Hoheisel J.D."/>
            <person name="Junqueira M.L."/>
            <person name="Kemper E.L."/>
            <person name="Kitajima J.P."/>
            <person name="Krieger J.E."/>
            <person name="Kuramae E.E."/>
            <person name="Laigret F."/>
            <person name="Lambais M.R."/>
            <person name="Leite L.C.C."/>
            <person name="Lemos E.G.M."/>
            <person name="Lemos M.V.F."/>
            <person name="Lopes S.A."/>
            <person name="Lopes C.R."/>
            <person name="Machado J.A."/>
            <person name="Machado M.A."/>
            <person name="Madeira A.M.B.N."/>
            <person name="Madeira H.M.F."/>
            <person name="Marino C.L."/>
            <person name="Marques M.V."/>
            <person name="Martins E.A.L."/>
            <person name="Martins E.M.F."/>
            <person name="Matsukuma A.Y."/>
            <person name="Menck C.F.M."/>
            <person name="Miracca E.C."/>
            <person name="Miyaki C.Y."/>
            <person name="Monteiro-Vitorello C.B."/>
            <person name="Moon D.H."/>
            <person name="Nagai M.A."/>
            <person name="Nascimento A.L.T.O."/>
            <person name="Netto L.E.S."/>
            <person name="Nhani A. Jr."/>
            <person name="Nobrega F.G."/>
            <person name="Nunes L.R."/>
            <person name="Oliveira M.A."/>
            <person name="de Oliveira M.C."/>
            <person name="de Oliveira R.C."/>
            <person name="Palmieri D.A."/>
            <person name="Paris A."/>
            <person name="Peixoto B.R."/>
            <person name="Pereira G.A.G."/>
            <person name="Pereira H.A. Jr."/>
            <person name="Pesquero J.B."/>
            <person name="Quaggio R.B."/>
            <person name="Roberto P.G."/>
            <person name="Rodrigues V."/>
            <person name="de Rosa A.J.M."/>
            <person name="de Rosa V.E. Jr."/>
            <person name="de Sa R.G."/>
            <person name="Santelli R.V."/>
            <person name="Sawasaki H.E."/>
            <person name="da Silva A.C.R."/>
            <person name="da Silva A.M."/>
            <person name="da Silva F.R."/>
            <person name="Silva W.A. Jr."/>
            <person name="da Silveira J.F."/>
            <person name="Silvestri M.L.Z."/>
            <person name="Siqueira W.J."/>
            <person name="de Souza A.A."/>
            <person name="de Souza A.P."/>
            <person name="Terenzi M.F."/>
            <person name="Truffi D."/>
            <person name="Tsai S.M."/>
            <person name="Tsuhako M.H."/>
            <person name="Vallada H."/>
            <person name="Van Sluys M.A."/>
            <person name="Verjovski-Almeida S."/>
            <person name="Vettore A.L."/>
            <person name="Zago M.A."/>
            <person name="Zatz M."/>
            <person name="Meidanis J."/>
            <person name="Setubal J.C."/>
        </authorList>
    </citation>
    <scope>NUCLEOTIDE SEQUENCE [LARGE SCALE GENOMIC DNA]</scope>
    <source>
        <strain>9a5c</strain>
    </source>
</reference>
<accession>Q9PEE6</accession>
<proteinExistence type="inferred from homology"/>
<evidence type="ECO:0000255" key="1">
    <source>
        <dbReference type="HAMAP-Rule" id="MF_00409"/>
    </source>
</evidence>
<dbReference type="EC" id="2.7.1.130" evidence="1"/>
<dbReference type="EMBL" id="AE003849">
    <property type="protein sequence ID" value="AAF83892.1"/>
    <property type="molecule type" value="Genomic_DNA"/>
</dbReference>
<dbReference type="PIR" id="G82726">
    <property type="entry name" value="G82726"/>
</dbReference>
<dbReference type="RefSeq" id="WP_010893599.1">
    <property type="nucleotide sequence ID" value="NC_002488.3"/>
</dbReference>
<dbReference type="SMR" id="Q9PEE6"/>
<dbReference type="STRING" id="160492.XF_1082"/>
<dbReference type="KEGG" id="xfa:XF_1082"/>
<dbReference type="eggNOG" id="COG1663">
    <property type="taxonomic scope" value="Bacteria"/>
</dbReference>
<dbReference type="HOGENOM" id="CLU_038816_2_0_6"/>
<dbReference type="UniPathway" id="UPA00359">
    <property type="reaction ID" value="UER00482"/>
</dbReference>
<dbReference type="Proteomes" id="UP000000812">
    <property type="component" value="Chromosome"/>
</dbReference>
<dbReference type="GO" id="GO:0005886">
    <property type="term" value="C:plasma membrane"/>
    <property type="evidence" value="ECO:0007669"/>
    <property type="project" value="TreeGrafter"/>
</dbReference>
<dbReference type="GO" id="GO:0005524">
    <property type="term" value="F:ATP binding"/>
    <property type="evidence" value="ECO:0007669"/>
    <property type="project" value="UniProtKB-UniRule"/>
</dbReference>
<dbReference type="GO" id="GO:0009029">
    <property type="term" value="F:tetraacyldisaccharide 4'-kinase activity"/>
    <property type="evidence" value="ECO:0007669"/>
    <property type="project" value="UniProtKB-UniRule"/>
</dbReference>
<dbReference type="GO" id="GO:0009245">
    <property type="term" value="P:lipid A biosynthetic process"/>
    <property type="evidence" value="ECO:0007669"/>
    <property type="project" value="UniProtKB-UniRule"/>
</dbReference>
<dbReference type="GO" id="GO:0009244">
    <property type="term" value="P:lipopolysaccharide core region biosynthetic process"/>
    <property type="evidence" value="ECO:0007669"/>
    <property type="project" value="TreeGrafter"/>
</dbReference>
<dbReference type="HAMAP" id="MF_00409">
    <property type="entry name" value="LpxK"/>
    <property type="match status" value="1"/>
</dbReference>
<dbReference type="InterPro" id="IPR003758">
    <property type="entry name" value="LpxK"/>
</dbReference>
<dbReference type="InterPro" id="IPR027417">
    <property type="entry name" value="P-loop_NTPase"/>
</dbReference>
<dbReference type="NCBIfam" id="TIGR00682">
    <property type="entry name" value="lpxK"/>
    <property type="match status" value="1"/>
</dbReference>
<dbReference type="PANTHER" id="PTHR42724">
    <property type="entry name" value="TETRAACYLDISACCHARIDE 4'-KINASE"/>
    <property type="match status" value="1"/>
</dbReference>
<dbReference type="PANTHER" id="PTHR42724:SF1">
    <property type="entry name" value="TETRAACYLDISACCHARIDE 4'-KINASE, MITOCHONDRIAL-RELATED"/>
    <property type="match status" value="1"/>
</dbReference>
<dbReference type="Pfam" id="PF02606">
    <property type="entry name" value="LpxK"/>
    <property type="match status" value="1"/>
</dbReference>
<dbReference type="SUPFAM" id="SSF52540">
    <property type="entry name" value="P-loop containing nucleoside triphosphate hydrolases"/>
    <property type="match status" value="1"/>
</dbReference>
<comment type="function">
    <text evidence="1">Transfers the gamma-phosphate of ATP to the 4'-position of a tetraacyldisaccharide 1-phosphate intermediate (termed DS-1-P) to form tetraacyldisaccharide 1,4'-bis-phosphate (lipid IVA).</text>
</comment>
<comment type="catalytic activity">
    <reaction evidence="1">
        <text>a lipid A disaccharide + ATP = a lipid IVA + ADP + H(+)</text>
        <dbReference type="Rhea" id="RHEA:67840"/>
        <dbReference type="ChEBI" id="CHEBI:15378"/>
        <dbReference type="ChEBI" id="CHEBI:30616"/>
        <dbReference type="ChEBI" id="CHEBI:176343"/>
        <dbReference type="ChEBI" id="CHEBI:176425"/>
        <dbReference type="ChEBI" id="CHEBI:456216"/>
        <dbReference type="EC" id="2.7.1.130"/>
    </reaction>
</comment>
<comment type="pathway">
    <text evidence="1">Glycolipid biosynthesis; lipid IV(A) biosynthesis; lipid IV(A) from (3R)-3-hydroxytetradecanoyl-[acyl-carrier-protein] and UDP-N-acetyl-alpha-D-glucosamine: step 6/6.</text>
</comment>
<comment type="similarity">
    <text evidence="1">Belongs to the LpxK family.</text>
</comment>
<protein>
    <recommendedName>
        <fullName evidence="1">Tetraacyldisaccharide 4'-kinase</fullName>
        <ecNumber evidence="1">2.7.1.130</ecNumber>
    </recommendedName>
    <alternativeName>
        <fullName evidence="1">Lipid A 4'-kinase</fullName>
    </alternativeName>
</protein>